<sequence>MKFTLSWLKDHLETDASLDEICDKLTAIGLEVGHVDDRSSLKGFVIAKVLKAMKHPDADKLQILLVDTGSGTPVQVICGAPNARVGLVGVLALPGTYVPGLDVTLSVGKIRGVESFGMMCSQAELELSNEHDGIIELPEDAPIGGLFATYAGLDDPVIDLSLTPNRSDCTGVHGIARDLAAAGIGRLRKLSLPKFVSSFETPLRVFLDFSQDASLCLGFAWREVRNIQNGVSPQWMQQRLSAIGLRPMNALVDMSNYISFDVGRPLHVFDADKIKGDLRVRRGREGEQLQALNGKIYNLSVKDCVIADEEGVVSIAGIMGGERTSCDEMTRRVIIESALWDARSIAQTGRALGLVSDARYRFERGVDPAFMETGLEVATELVLRLCGGEGSKTKIVGYQQPEIKQIAFPFSEIKRLTHLEIEREQVITILTNLGFGIEGEGNVVTVKVPTWRPDIAGKADLVEEVMRIYGLDKIEPIPLEGFAEAKGQVLTCTQIRSRVTRLALVDRGMREAVTWSFISESQAIAFGGGQAQLKLVNPIAADMSVMRPSLLPGLLIAAQRNADRGFPDLALFEVSNIYEDDTPEKQQSVAGGIRRGTERFEGAGRFWDGHTRTVDVFEAKADALAVLEACGLDIDKVQIEVGAPDWYHPGRSGVMKLGSKIIVGFFGVLHPAILERLDVSGPLCGFEIFLDRIPESKKKATKSRSPLKLSPFQMVRRDFAFVVDKVITSSLIVRAASGADKKLIHSVRVFDVFEDLSLGEDKKSVAIEVAIQPIERTLTDGDIEALASKVVENVTKATGAYLRR</sequence>
<comment type="catalytic activity">
    <reaction evidence="1">
        <text>tRNA(Phe) + L-phenylalanine + ATP = L-phenylalanyl-tRNA(Phe) + AMP + diphosphate + H(+)</text>
        <dbReference type="Rhea" id="RHEA:19413"/>
        <dbReference type="Rhea" id="RHEA-COMP:9668"/>
        <dbReference type="Rhea" id="RHEA-COMP:9699"/>
        <dbReference type="ChEBI" id="CHEBI:15378"/>
        <dbReference type="ChEBI" id="CHEBI:30616"/>
        <dbReference type="ChEBI" id="CHEBI:33019"/>
        <dbReference type="ChEBI" id="CHEBI:58095"/>
        <dbReference type="ChEBI" id="CHEBI:78442"/>
        <dbReference type="ChEBI" id="CHEBI:78531"/>
        <dbReference type="ChEBI" id="CHEBI:456215"/>
        <dbReference type="EC" id="6.1.1.20"/>
    </reaction>
</comment>
<comment type="cofactor">
    <cofactor evidence="1">
        <name>Mg(2+)</name>
        <dbReference type="ChEBI" id="CHEBI:18420"/>
    </cofactor>
    <text evidence="1">Binds 2 magnesium ions per tetramer.</text>
</comment>
<comment type="subunit">
    <text evidence="1">Tetramer of two alpha and two beta subunits.</text>
</comment>
<comment type="subcellular location">
    <subcellularLocation>
        <location evidence="1">Cytoplasm</location>
    </subcellularLocation>
</comment>
<comment type="similarity">
    <text evidence="1">Belongs to the phenylalanyl-tRNA synthetase beta subunit family. Type 1 subfamily.</text>
</comment>
<feature type="chain" id="PRO_0000126847" description="Phenylalanine--tRNA ligase beta subunit">
    <location>
        <begin position="1"/>
        <end position="804"/>
    </location>
</feature>
<feature type="domain" description="tRNA-binding" evidence="1">
    <location>
        <begin position="38"/>
        <end position="148"/>
    </location>
</feature>
<feature type="domain" description="B5" evidence="1">
    <location>
        <begin position="401"/>
        <end position="476"/>
    </location>
</feature>
<feature type="domain" description="FDX-ACB" evidence="1">
    <location>
        <begin position="710"/>
        <end position="803"/>
    </location>
</feature>
<feature type="binding site" evidence="1">
    <location>
        <position position="454"/>
    </location>
    <ligand>
        <name>Mg(2+)</name>
        <dbReference type="ChEBI" id="CHEBI:18420"/>
        <note>shared with alpha subunit</note>
    </ligand>
</feature>
<feature type="binding site" evidence="1">
    <location>
        <position position="460"/>
    </location>
    <ligand>
        <name>Mg(2+)</name>
        <dbReference type="ChEBI" id="CHEBI:18420"/>
        <note>shared with alpha subunit</note>
    </ligand>
</feature>
<feature type="binding site" evidence="1">
    <location>
        <position position="463"/>
    </location>
    <ligand>
        <name>Mg(2+)</name>
        <dbReference type="ChEBI" id="CHEBI:18420"/>
        <note>shared with alpha subunit</note>
    </ligand>
</feature>
<feature type="binding site" evidence="1">
    <location>
        <position position="464"/>
    </location>
    <ligand>
        <name>Mg(2+)</name>
        <dbReference type="ChEBI" id="CHEBI:18420"/>
        <note>shared with alpha subunit</note>
    </ligand>
</feature>
<reference key="1">
    <citation type="journal article" date="2004" name="Proc. Natl. Acad. Sci. U.S.A.">
        <title>The louse-borne human pathogen Bartonella quintana is a genomic derivative of the zoonotic agent Bartonella henselae.</title>
        <authorList>
            <person name="Alsmark U.C.M."/>
            <person name="Frank A.C."/>
            <person name="Karlberg E.O."/>
            <person name="Legault B.-A."/>
            <person name="Ardell D.H."/>
            <person name="Canbaeck B."/>
            <person name="Eriksson A.-S."/>
            <person name="Naeslund A.K."/>
            <person name="Handley S.A."/>
            <person name="Huvet M."/>
            <person name="La Scola B."/>
            <person name="Holmberg M."/>
            <person name="Andersson S.G.E."/>
        </authorList>
    </citation>
    <scope>NUCLEOTIDE SEQUENCE [LARGE SCALE GENOMIC DNA]</scope>
    <source>
        <strain>Toulouse</strain>
    </source>
</reference>
<dbReference type="EC" id="6.1.1.20" evidence="1"/>
<dbReference type="EMBL" id="BX897700">
    <property type="protein sequence ID" value="CAF25585.1"/>
    <property type="molecule type" value="Genomic_DNA"/>
</dbReference>
<dbReference type="RefSeq" id="WP_011178912.1">
    <property type="nucleotide sequence ID" value="NC_005955.1"/>
</dbReference>
<dbReference type="SMR" id="Q6G0Y3"/>
<dbReference type="KEGG" id="bqu:BQ00780"/>
<dbReference type="eggNOG" id="COG0072">
    <property type="taxonomic scope" value="Bacteria"/>
</dbReference>
<dbReference type="eggNOG" id="COG0073">
    <property type="taxonomic scope" value="Bacteria"/>
</dbReference>
<dbReference type="HOGENOM" id="CLU_016891_0_0_5"/>
<dbReference type="OrthoDB" id="9805455at2"/>
<dbReference type="Proteomes" id="UP000000597">
    <property type="component" value="Chromosome"/>
</dbReference>
<dbReference type="GO" id="GO:0009328">
    <property type="term" value="C:phenylalanine-tRNA ligase complex"/>
    <property type="evidence" value="ECO:0007669"/>
    <property type="project" value="TreeGrafter"/>
</dbReference>
<dbReference type="GO" id="GO:0005524">
    <property type="term" value="F:ATP binding"/>
    <property type="evidence" value="ECO:0007669"/>
    <property type="project" value="UniProtKB-UniRule"/>
</dbReference>
<dbReference type="GO" id="GO:0000287">
    <property type="term" value="F:magnesium ion binding"/>
    <property type="evidence" value="ECO:0007669"/>
    <property type="project" value="UniProtKB-UniRule"/>
</dbReference>
<dbReference type="GO" id="GO:0004826">
    <property type="term" value="F:phenylalanine-tRNA ligase activity"/>
    <property type="evidence" value="ECO:0007669"/>
    <property type="project" value="UniProtKB-UniRule"/>
</dbReference>
<dbReference type="GO" id="GO:0000049">
    <property type="term" value="F:tRNA binding"/>
    <property type="evidence" value="ECO:0007669"/>
    <property type="project" value="UniProtKB-KW"/>
</dbReference>
<dbReference type="GO" id="GO:0006432">
    <property type="term" value="P:phenylalanyl-tRNA aminoacylation"/>
    <property type="evidence" value="ECO:0007669"/>
    <property type="project" value="UniProtKB-UniRule"/>
</dbReference>
<dbReference type="CDD" id="cd00769">
    <property type="entry name" value="PheRS_beta_core"/>
    <property type="match status" value="1"/>
</dbReference>
<dbReference type="CDD" id="cd02796">
    <property type="entry name" value="tRNA_bind_bactPheRS"/>
    <property type="match status" value="1"/>
</dbReference>
<dbReference type="FunFam" id="2.40.50.140:FF:000045">
    <property type="entry name" value="Phenylalanine--tRNA ligase beta subunit"/>
    <property type="match status" value="1"/>
</dbReference>
<dbReference type="Gene3D" id="3.30.56.10">
    <property type="match status" value="2"/>
</dbReference>
<dbReference type="Gene3D" id="3.30.930.10">
    <property type="entry name" value="Bira Bifunctional Protein, Domain 2"/>
    <property type="match status" value="1"/>
</dbReference>
<dbReference type="Gene3D" id="3.30.70.380">
    <property type="entry name" value="Ferrodoxin-fold anticodon-binding domain"/>
    <property type="match status" value="1"/>
</dbReference>
<dbReference type="Gene3D" id="2.40.50.140">
    <property type="entry name" value="Nucleic acid-binding proteins"/>
    <property type="match status" value="1"/>
</dbReference>
<dbReference type="Gene3D" id="3.50.40.10">
    <property type="entry name" value="Phenylalanyl-trna Synthetase, Chain B, domain 3"/>
    <property type="match status" value="1"/>
</dbReference>
<dbReference type="HAMAP" id="MF_00283">
    <property type="entry name" value="Phe_tRNA_synth_beta1"/>
    <property type="match status" value="1"/>
</dbReference>
<dbReference type="InterPro" id="IPR045864">
    <property type="entry name" value="aa-tRNA-synth_II/BPL/LPL"/>
</dbReference>
<dbReference type="InterPro" id="IPR005146">
    <property type="entry name" value="B3/B4_tRNA-bd"/>
</dbReference>
<dbReference type="InterPro" id="IPR009061">
    <property type="entry name" value="DNA-bd_dom_put_sf"/>
</dbReference>
<dbReference type="InterPro" id="IPR005121">
    <property type="entry name" value="Fdx_antiC-bd"/>
</dbReference>
<dbReference type="InterPro" id="IPR036690">
    <property type="entry name" value="Fdx_antiC-bd_sf"/>
</dbReference>
<dbReference type="InterPro" id="IPR012340">
    <property type="entry name" value="NA-bd_OB-fold"/>
</dbReference>
<dbReference type="InterPro" id="IPR045060">
    <property type="entry name" value="Phe-tRNA-ligase_IIc_bsu"/>
</dbReference>
<dbReference type="InterPro" id="IPR004532">
    <property type="entry name" value="Phe-tRNA-ligase_IIc_bsu_bact"/>
</dbReference>
<dbReference type="InterPro" id="IPR020825">
    <property type="entry name" value="Phe-tRNA_synthase-like_B3/B4"/>
</dbReference>
<dbReference type="InterPro" id="IPR041616">
    <property type="entry name" value="PheRS_beta_core"/>
</dbReference>
<dbReference type="InterPro" id="IPR002547">
    <property type="entry name" value="tRNA-bd_dom"/>
</dbReference>
<dbReference type="InterPro" id="IPR033714">
    <property type="entry name" value="tRNA_bind_bactPheRS"/>
</dbReference>
<dbReference type="InterPro" id="IPR005147">
    <property type="entry name" value="tRNA_synthase_B5-dom"/>
</dbReference>
<dbReference type="NCBIfam" id="TIGR00472">
    <property type="entry name" value="pheT_bact"/>
    <property type="match status" value="1"/>
</dbReference>
<dbReference type="NCBIfam" id="NF045760">
    <property type="entry name" value="YtpR"/>
    <property type="match status" value="1"/>
</dbReference>
<dbReference type="PANTHER" id="PTHR10947:SF0">
    <property type="entry name" value="PHENYLALANINE--TRNA LIGASE BETA SUBUNIT"/>
    <property type="match status" value="1"/>
</dbReference>
<dbReference type="PANTHER" id="PTHR10947">
    <property type="entry name" value="PHENYLALANYL-TRNA SYNTHETASE BETA CHAIN AND LEUCINE-RICH REPEAT-CONTAINING PROTEIN 47"/>
    <property type="match status" value="1"/>
</dbReference>
<dbReference type="Pfam" id="PF03483">
    <property type="entry name" value="B3_4"/>
    <property type="match status" value="1"/>
</dbReference>
<dbReference type="Pfam" id="PF03484">
    <property type="entry name" value="B5"/>
    <property type="match status" value="1"/>
</dbReference>
<dbReference type="Pfam" id="PF03147">
    <property type="entry name" value="FDX-ACB"/>
    <property type="match status" value="1"/>
</dbReference>
<dbReference type="Pfam" id="PF01588">
    <property type="entry name" value="tRNA_bind"/>
    <property type="match status" value="1"/>
</dbReference>
<dbReference type="Pfam" id="PF17759">
    <property type="entry name" value="tRNA_synthFbeta"/>
    <property type="match status" value="1"/>
</dbReference>
<dbReference type="SMART" id="SM00873">
    <property type="entry name" value="B3_4"/>
    <property type="match status" value="1"/>
</dbReference>
<dbReference type="SMART" id="SM00874">
    <property type="entry name" value="B5"/>
    <property type="match status" value="1"/>
</dbReference>
<dbReference type="SMART" id="SM00896">
    <property type="entry name" value="FDX-ACB"/>
    <property type="match status" value="1"/>
</dbReference>
<dbReference type="SUPFAM" id="SSF54991">
    <property type="entry name" value="Anticodon-binding domain of PheRS"/>
    <property type="match status" value="1"/>
</dbReference>
<dbReference type="SUPFAM" id="SSF55681">
    <property type="entry name" value="Class II aaRS and biotin synthetases"/>
    <property type="match status" value="1"/>
</dbReference>
<dbReference type="SUPFAM" id="SSF50249">
    <property type="entry name" value="Nucleic acid-binding proteins"/>
    <property type="match status" value="1"/>
</dbReference>
<dbReference type="SUPFAM" id="SSF56037">
    <property type="entry name" value="PheT/TilS domain"/>
    <property type="match status" value="1"/>
</dbReference>
<dbReference type="SUPFAM" id="SSF46955">
    <property type="entry name" value="Putative DNA-binding domain"/>
    <property type="match status" value="1"/>
</dbReference>
<dbReference type="PROSITE" id="PS51483">
    <property type="entry name" value="B5"/>
    <property type="match status" value="1"/>
</dbReference>
<dbReference type="PROSITE" id="PS51447">
    <property type="entry name" value="FDX_ACB"/>
    <property type="match status" value="1"/>
</dbReference>
<dbReference type="PROSITE" id="PS50886">
    <property type="entry name" value="TRBD"/>
    <property type="match status" value="1"/>
</dbReference>
<gene>
    <name evidence="1" type="primary">pheT</name>
    <name type="ordered locus">BQ00780</name>
</gene>
<organism>
    <name type="scientific">Bartonella quintana (strain Toulouse)</name>
    <name type="common">Rochalimaea quintana</name>
    <dbReference type="NCBI Taxonomy" id="283165"/>
    <lineage>
        <taxon>Bacteria</taxon>
        <taxon>Pseudomonadati</taxon>
        <taxon>Pseudomonadota</taxon>
        <taxon>Alphaproteobacteria</taxon>
        <taxon>Hyphomicrobiales</taxon>
        <taxon>Bartonellaceae</taxon>
        <taxon>Bartonella</taxon>
    </lineage>
</organism>
<evidence type="ECO:0000255" key="1">
    <source>
        <dbReference type="HAMAP-Rule" id="MF_00283"/>
    </source>
</evidence>
<name>SYFB_BARQU</name>
<keyword id="KW-0030">Aminoacyl-tRNA synthetase</keyword>
<keyword id="KW-0067">ATP-binding</keyword>
<keyword id="KW-0963">Cytoplasm</keyword>
<keyword id="KW-0436">Ligase</keyword>
<keyword id="KW-0460">Magnesium</keyword>
<keyword id="KW-0479">Metal-binding</keyword>
<keyword id="KW-0547">Nucleotide-binding</keyword>
<keyword id="KW-0648">Protein biosynthesis</keyword>
<keyword id="KW-0694">RNA-binding</keyword>
<keyword id="KW-0820">tRNA-binding</keyword>
<proteinExistence type="inferred from homology"/>
<accession>Q6G0Y3</accession>
<protein>
    <recommendedName>
        <fullName evidence="1">Phenylalanine--tRNA ligase beta subunit</fullName>
        <ecNumber evidence="1">6.1.1.20</ecNumber>
    </recommendedName>
    <alternativeName>
        <fullName evidence="1">Phenylalanyl-tRNA synthetase beta subunit</fullName>
        <shortName evidence="1">PheRS</shortName>
    </alternativeName>
</protein>